<accession>Q4R538</accession>
<feature type="chain" id="PRO_0000253589" description="Tubulin alpha-1B chain">
    <location>
        <begin position="1"/>
        <end position="451"/>
    </location>
</feature>
<feature type="chain" id="PRO_0000437385" description="Detyrosinated tubulin alpha-1B chain" evidence="3">
    <location>
        <begin position="1"/>
        <end position="450"/>
    </location>
</feature>
<feature type="region of interest" description="Disordered" evidence="7">
    <location>
        <begin position="432"/>
        <end position="451"/>
    </location>
</feature>
<feature type="short sequence motif" description="MREC motif" evidence="3">
    <location>
        <begin position="1"/>
        <end position="4"/>
    </location>
</feature>
<feature type="active site" evidence="3">
    <location>
        <position position="254"/>
    </location>
</feature>
<feature type="binding site" evidence="3">
    <location>
        <position position="10"/>
    </location>
    <ligand>
        <name>GTP</name>
        <dbReference type="ChEBI" id="CHEBI:37565"/>
    </ligand>
</feature>
<feature type="binding site" evidence="3">
    <location>
        <position position="11"/>
    </location>
    <ligand>
        <name>GTP</name>
        <dbReference type="ChEBI" id="CHEBI:37565"/>
    </ligand>
</feature>
<feature type="binding site" evidence="3">
    <location>
        <position position="12"/>
    </location>
    <ligand>
        <name>GTP</name>
        <dbReference type="ChEBI" id="CHEBI:37565"/>
    </ligand>
</feature>
<feature type="binding site" evidence="3">
    <location>
        <position position="15"/>
    </location>
    <ligand>
        <name>GTP</name>
        <dbReference type="ChEBI" id="CHEBI:37565"/>
    </ligand>
</feature>
<feature type="binding site" evidence="3">
    <location>
        <position position="71"/>
    </location>
    <ligand>
        <name>GTP</name>
        <dbReference type="ChEBI" id="CHEBI:37565"/>
    </ligand>
</feature>
<feature type="binding site" evidence="3">
    <location>
        <position position="71"/>
    </location>
    <ligand>
        <name>Mg(2+)</name>
        <dbReference type="ChEBI" id="CHEBI:18420"/>
    </ligand>
</feature>
<feature type="binding site" evidence="3">
    <location>
        <position position="99"/>
    </location>
    <ligand>
        <name>GTP</name>
        <dbReference type="ChEBI" id="CHEBI:37565"/>
    </ligand>
</feature>
<feature type="binding site" evidence="3">
    <location>
        <position position="140"/>
    </location>
    <ligand>
        <name>GTP</name>
        <dbReference type="ChEBI" id="CHEBI:37565"/>
    </ligand>
</feature>
<feature type="binding site" evidence="3">
    <location>
        <position position="143"/>
    </location>
    <ligand>
        <name>GTP</name>
        <dbReference type="ChEBI" id="CHEBI:37565"/>
    </ligand>
</feature>
<feature type="binding site" evidence="3">
    <location>
        <position position="144"/>
    </location>
    <ligand>
        <name>GTP</name>
        <dbReference type="ChEBI" id="CHEBI:37565"/>
    </ligand>
</feature>
<feature type="binding site" evidence="3">
    <location>
        <position position="145"/>
    </location>
    <ligand>
        <name>GTP</name>
        <dbReference type="ChEBI" id="CHEBI:37565"/>
    </ligand>
</feature>
<feature type="binding site" evidence="3">
    <location>
        <position position="146"/>
    </location>
    <ligand>
        <name>GTP</name>
        <dbReference type="ChEBI" id="CHEBI:37565"/>
    </ligand>
</feature>
<feature type="binding site" evidence="3">
    <location>
        <position position="179"/>
    </location>
    <ligand>
        <name>GTP</name>
        <dbReference type="ChEBI" id="CHEBI:37565"/>
    </ligand>
</feature>
<feature type="binding site" evidence="3">
    <location>
        <position position="183"/>
    </location>
    <ligand>
        <name>GTP</name>
        <dbReference type="ChEBI" id="CHEBI:37565"/>
    </ligand>
</feature>
<feature type="binding site" evidence="3">
    <location>
        <position position="206"/>
    </location>
    <ligand>
        <name>GTP</name>
        <dbReference type="ChEBI" id="CHEBI:37565"/>
    </ligand>
</feature>
<feature type="binding site" evidence="3">
    <location>
        <position position="224"/>
    </location>
    <ligand>
        <name>GTP</name>
        <dbReference type="ChEBI" id="CHEBI:37565"/>
    </ligand>
</feature>
<feature type="binding site" evidence="3">
    <location>
        <position position="228"/>
    </location>
    <ligand>
        <name>GTP</name>
        <dbReference type="ChEBI" id="CHEBI:37565"/>
    </ligand>
</feature>
<feature type="binding site" evidence="3">
    <location>
        <position position="252"/>
    </location>
    <ligand>
        <name>GTP</name>
        <dbReference type="ChEBI" id="CHEBI:37565"/>
    </ligand>
</feature>
<feature type="site" description="Involved in polymerization" evidence="1">
    <location>
        <position position="451"/>
    </location>
</feature>
<feature type="modified residue" description="N6,N6,N6-trimethyllysine; alternate" evidence="3">
    <location>
        <position position="40"/>
    </location>
</feature>
<feature type="modified residue" description="N6-acetyllysine; alternate" evidence="3">
    <location>
        <position position="40"/>
    </location>
</feature>
<feature type="modified residue" description="Phosphoserine" evidence="3">
    <location>
        <position position="48"/>
    </location>
</feature>
<feature type="modified residue" description="Phosphoserine" evidence="3">
    <location>
        <position position="232"/>
    </location>
</feature>
<feature type="modified residue" description="3'-nitrotyrosine" evidence="5">
    <location>
        <position position="282"/>
    </location>
</feature>
<feature type="modified residue" description="Omega-N-methylarginine" evidence="3">
    <location>
        <position position="339"/>
    </location>
</feature>
<feature type="modified residue" description="Phosphoserine" evidence="5">
    <location>
        <position position="439"/>
    </location>
</feature>
<feature type="modified residue" description="5-glutamyl polyglutamate" evidence="3">
    <location>
        <position position="443"/>
    </location>
</feature>
<feature type="modified residue" description="5-glutamyl polyglutamate" evidence="4">
    <location>
        <position position="445"/>
    </location>
</feature>
<feature type="modified residue" description="3'-nitrotyrosine" evidence="6">
    <location>
        <position position="451"/>
    </location>
</feature>
<feature type="cross-link" description="Glycyl lysine isopeptide (Lys-Gly) (interchain with G-Cter in ubiquitin)" evidence="3">
    <location>
        <position position="326"/>
    </location>
</feature>
<feature type="cross-link" description="Glycyl lysine isopeptide (Lys-Gly) (interchain with G-Cter in ubiquitin)" evidence="3">
    <location>
        <position position="370"/>
    </location>
</feature>
<gene>
    <name type="primary">TUBA1B</name>
    <name type="ORF">QccE-20727</name>
</gene>
<proteinExistence type="evidence at transcript level"/>
<comment type="function">
    <text evidence="3">Tubulin is the major constituent of microtubules, protein filaments consisting of alpha- and beta-tubulin heterodimers (By similarity). Microtubules grow by the addition of GTP-tubulin dimers to the microtubule end, where a stabilizing cap forms (By similarity). Below the cap, tubulin dimers are in GDP-bound state, owing to GTPase activity of alpha-tubulin (By similarity).</text>
</comment>
<comment type="catalytic activity">
    <reaction evidence="3">
        <text>GTP + H2O = GDP + phosphate + H(+)</text>
        <dbReference type="Rhea" id="RHEA:19669"/>
        <dbReference type="ChEBI" id="CHEBI:15377"/>
        <dbReference type="ChEBI" id="CHEBI:15378"/>
        <dbReference type="ChEBI" id="CHEBI:37565"/>
        <dbReference type="ChEBI" id="CHEBI:43474"/>
        <dbReference type="ChEBI" id="CHEBI:58189"/>
    </reaction>
    <physiologicalReaction direction="left-to-right" evidence="3">
        <dbReference type="Rhea" id="RHEA:19670"/>
    </physiologicalReaction>
</comment>
<comment type="cofactor">
    <cofactor evidence="3">
        <name>Mg(2+)</name>
        <dbReference type="ChEBI" id="CHEBI:18420"/>
    </cofactor>
</comment>
<comment type="subunit">
    <text evidence="3 4">Heterodimer of alpha- and beta-tubulin (By similarity). A typical microtubule is a hollow water-filled tube with an outer diameter of 25 nm and an inner diameter of 15 nM (By similarity). Alpha-beta heterodimers associate head-to-tail to form protofilaments running lengthwise along the microtubule wall with the beta-tubulin subunit facing the microtubule plus end conferring a structural polarity (By similarity). Microtubules usually have 13 protofilaments but different protofilament numbers can be found in some organisms and specialized cells (By similarity). Interacts with gamma-tubulin; the interaction allows microtubules to nucleate from the gamma-tubulin ring complex (gTuRC) (By similarity). Nascent microtubule interacts (via alpha-tubulin MREC motif) with TTC5/STRAP; this interaction may result in tubulin mRNA-targeted degradation (By similarity). Component of sperm flagellar doublet microtubules (By similarity).</text>
</comment>
<comment type="subcellular location">
    <subcellularLocation>
        <location>Cytoplasm</location>
        <location>Cytoskeleton</location>
    </subcellularLocation>
</comment>
<comment type="domain">
    <text evidence="3">The MREC motif mediates interaction with TTC5/STRAP and may be critical for tubulin autoregulation.</text>
</comment>
<comment type="PTM">
    <text evidence="2">Some glutamate residues at the C-terminus are polyglycylated, resulting in polyglycine chains on the gamma-carboxyl group. Glycylation is mainly limited to tubulin incorporated into axonemes (cilia and flagella) whereas glutamylation is prevalent in neuronal cells, centrioles, axonemes, and the mitotic spindle. Both modifications can coexist on the same protein on adjacent residues, and lowering polyglycylation levels increases polyglutamylation, and reciprocally. Cilia and flagella glycylation is required for their stability and maintenance. Flagella glycylation controls sperm motility.</text>
</comment>
<comment type="PTM">
    <text evidence="2 6">Some glutamate residues at the C-terminus are polyglutamylated, resulting in polyglutamate chains on the gamma-carboxyl group (By similarity). Polyglutamylation plays a key role in microtubule severing by spastin (SPAST). SPAST preferentially recognizes and acts on microtubules decorated with short polyglutamate tails: severing activity by SPAST increases as the number of glutamates per tubulin rises from one to eight, but decreases beyond this glutamylation threshold (By similarity). Glutamylation is also involved in cilia motility (By similarity).</text>
</comment>
<comment type="PTM">
    <text evidence="6">Acetylation of alpha chains at Lys-40 is located inside the microtubule lumen. This modification has been correlated with increased microtubule stability, intracellular transport and ciliary assembly.</text>
</comment>
<comment type="PTM">
    <text evidence="3">Methylation of alpha chains at Lys-40 is found in mitotic microtubules and is required for normal mitosis and cytokinesis contributing to genomic stability.</text>
</comment>
<comment type="PTM">
    <text evidence="6">Nitration of Tyr-451 is irreversible and interferes with normal dynein intracellular distribution.</text>
</comment>
<comment type="PTM">
    <text evidence="4 6">Undergoes a tyrosination/detyrosination cycle, the cyclic removal and re-addition of a C-terminal tyrosine residue by the enzymes tubulin tyrosine carboxypeptidase (MATCAP1, VASH1 or VASH2) and tubulin tyrosine ligase (TTL), respectively.</text>
</comment>
<comment type="PTM">
    <molecule>Tubulin alpha-1B chain</molecule>
    <text evidence="4 6">Tyrosination promotes microtubule interaction with CAP-Gly domain-containing proteins such as CLIP1, CLIP2 and DCTN1 (By similarity). Tyrosination regulates the initiation of dynein-dynactin motility via interaction with DCTN1, which brings the dynein-dynactin complex into contact with microtubules. In neurons, tyrosinated tubulins mediate the initiation of retrograde vesicle transport (By similarity).</text>
</comment>
<comment type="PTM">
    <molecule>Detyrosinated tubulin alpha-1B chain</molecule>
    <text evidence="2 3">Detyrosination is involved in metaphase plate congression by guiding chromosomes during mitosis: detyrosination promotes interaction with CENPE, promoting pole-proximal transport of chromosomes toward the equator (By similarity). Detyrosination increases microtubules-dependent mechanotransduction in dystrophic cardiac and skeletal muscle. In cardiomyocytes, detyrosinated microtubules are required to resist to contractile compression during contraction: detyrosination promotes association with desmin (DES) at force-generating sarcomeres, leading to buckled microtubules and mechanical resistance to contraction (By similarity).</text>
</comment>
<comment type="similarity">
    <text evidence="8">Belongs to the tubulin family.</text>
</comment>
<dbReference type="EC" id="3.6.5.-" evidence="3"/>
<dbReference type="EMBL" id="AB169706">
    <property type="protein sequence ID" value="BAE01787.1"/>
    <property type="molecule type" value="mRNA"/>
</dbReference>
<dbReference type="RefSeq" id="NP_001272182.1">
    <property type="nucleotide sequence ID" value="NM_001285253.1"/>
</dbReference>
<dbReference type="RefSeq" id="XP_045222428.1">
    <property type="nucleotide sequence ID" value="XM_045366493.2"/>
</dbReference>
<dbReference type="SMR" id="Q4R538"/>
<dbReference type="STRING" id="9541.ENSMFAP00000030515"/>
<dbReference type="Ensembl" id="ENSMFAT00000004309.2">
    <property type="protein sequence ID" value="ENSMFAP00000030104.1"/>
    <property type="gene ID" value="ENSMFAG00000035643.2"/>
</dbReference>
<dbReference type="Ensembl" id="ENSMFAT00000089724.1">
    <property type="protein sequence ID" value="ENSMFAP00000063210.1"/>
    <property type="gene ID" value="ENSMFAG00000035643.2"/>
</dbReference>
<dbReference type="GeneID" id="101867500"/>
<dbReference type="VEuPathDB" id="HostDB:ENSMFAG00000042144"/>
<dbReference type="eggNOG" id="KOG1376">
    <property type="taxonomic scope" value="Eukaryota"/>
</dbReference>
<dbReference type="GeneTree" id="ENSGT00950000182825"/>
<dbReference type="OMA" id="ESCYDIC"/>
<dbReference type="Proteomes" id="UP000233100">
    <property type="component" value="Chromosome 11"/>
</dbReference>
<dbReference type="Bgee" id="ENSMFAG00000035643">
    <property type="expression patterns" value="Expressed in bone marrow and 13 other cell types or tissues"/>
</dbReference>
<dbReference type="GO" id="GO:0005737">
    <property type="term" value="C:cytoplasm"/>
    <property type="evidence" value="ECO:0007669"/>
    <property type="project" value="UniProtKB-KW"/>
</dbReference>
<dbReference type="GO" id="GO:0005874">
    <property type="term" value="C:microtubule"/>
    <property type="evidence" value="ECO:0007669"/>
    <property type="project" value="UniProtKB-KW"/>
</dbReference>
<dbReference type="GO" id="GO:0015630">
    <property type="term" value="C:microtubule cytoskeleton"/>
    <property type="evidence" value="ECO:0000250"/>
    <property type="project" value="UniProtKB"/>
</dbReference>
<dbReference type="GO" id="GO:0005525">
    <property type="term" value="F:GTP binding"/>
    <property type="evidence" value="ECO:0000250"/>
    <property type="project" value="UniProtKB"/>
</dbReference>
<dbReference type="GO" id="GO:0003924">
    <property type="term" value="F:GTPase activity"/>
    <property type="evidence" value="ECO:0000250"/>
    <property type="project" value="UniProtKB"/>
</dbReference>
<dbReference type="GO" id="GO:0046872">
    <property type="term" value="F:metal ion binding"/>
    <property type="evidence" value="ECO:0007669"/>
    <property type="project" value="UniProtKB-KW"/>
</dbReference>
<dbReference type="GO" id="GO:0005200">
    <property type="term" value="F:structural constituent of cytoskeleton"/>
    <property type="evidence" value="ECO:0000250"/>
    <property type="project" value="UniProtKB"/>
</dbReference>
<dbReference type="GO" id="GO:0000226">
    <property type="term" value="P:microtubule cytoskeleton organization"/>
    <property type="evidence" value="ECO:0000250"/>
    <property type="project" value="UniProtKB"/>
</dbReference>
<dbReference type="CDD" id="cd02186">
    <property type="entry name" value="alpha_tubulin"/>
    <property type="match status" value="1"/>
</dbReference>
<dbReference type="FunFam" id="1.10.287.600:FF:000005">
    <property type="entry name" value="Tubulin alpha chain"/>
    <property type="match status" value="1"/>
</dbReference>
<dbReference type="FunFam" id="3.30.1330.20:FF:000001">
    <property type="entry name" value="Tubulin alpha chain"/>
    <property type="match status" value="1"/>
</dbReference>
<dbReference type="FunFam" id="3.40.50.1440:FF:000002">
    <property type="entry name" value="Tubulin alpha chain"/>
    <property type="match status" value="1"/>
</dbReference>
<dbReference type="Gene3D" id="1.10.287.600">
    <property type="entry name" value="Helix hairpin bin"/>
    <property type="match status" value="1"/>
</dbReference>
<dbReference type="Gene3D" id="3.30.1330.20">
    <property type="entry name" value="Tubulin/FtsZ, C-terminal domain"/>
    <property type="match status" value="1"/>
</dbReference>
<dbReference type="Gene3D" id="3.40.50.1440">
    <property type="entry name" value="Tubulin/FtsZ, GTPase domain"/>
    <property type="match status" value="1"/>
</dbReference>
<dbReference type="InterPro" id="IPR002452">
    <property type="entry name" value="Alpha_tubulin"/>
</dbReference>
<dbReference type="InterPro" id="IPR008280">
    <property type="entry name" value="Tub_FtsZ_C"/>
</dbReference>
<dbReference type="InterPro" id="IPR000217">
    <property type="entry name" value="Tubulin"/>
</dbReference>
<dbReference type="InterPro" id="IPR037103">
    <property type="entry name" value="Tubulin/FtsZ-like_C"/>
</dbReference>
<dbReference type="InterPro" id="IPR018316">
    <property type="entry name" value="Tubulin/FtsZ_2-layer-sand-dom"/>
</dbReference>
<dbReference type="InterPro" id="IPR036525">
    <property type="entry name" value="Tubulin/FtsZ_GTPase_sf"/>
</dbReference>
<dbReference type="InterPro" id="IPR023123">
    <property type="entry name" value="Tubulin_C"/>
</dbReference>
<dbReference type="InterPro" id="IPR017975">
    <property type="entry name" value="Tubulin_CS"/>
</dbReference>
<dbReference type="InterPro" id="IPR003008">
    <property type="entry name" value="Tubulin_FtsZ_GTPase"/>
</dbReference>
<dbReference type="PANTHER" id="PTHR11588">
    <property type="entry name" value="TUBULIN"/>
    <property type="match status" value="1"/>
</dbReference>
<dbReference type="Pfam" id="PF00091">
    <property type="entry name" value="Tubulin"/>
    <property type="match status" value="1"/>
</dbReference>
<dbReference type="Pfam" id="PF03953">
    <property type="entry name" value="Tubulin_C"/>
    <property type="match status" value="1"/>
</dbReference>
<dbReference type="PRINTS" id="PR01162">
    <property type="entry name" value="ALPHATUBULIN"/>
</dbReference>
<dbReference type="PRINTS" id="PR01161">
    <property type="entry name" value="TUBULIN"/>
</dbReference>
<dbReference type="SMART" id="SM00864">
    <property type="entry name" value="Tubulin"/>
    <property type="match status" value="1"/>
</dbReference>
<dbReference type="SMART" id="SM00865">
    <property type="entry name" value="Tubulin_C"/>
    <property type="match status" value="1"/>
</dbReference>
<dbReference type="SUPFAM" id="SSF55307">
    <property type="entry name" value="Tubulin C-terminal domain-like"/>
    <property type="match status" value="1"/>
</dbReference>
<dbReference type="SUPFAM" id="SSF52490">
    <property type="entry name" value="Tubulin nucleotide-binding domain-like"/>
    <property type="match status" value="1"/>
</dbReference>
<dbReference type="PROSITE" id="PS00227">
    <property type="entry name" value="TUBULIN"/>
    <property type="match status" value="1"/>
</dbReference>
<organism>
    <name type="scientific">Macaca fascicularis</name>
    <name type="common">Crab-eating macaque</name>
    <name type="synonym">Cynomolgus monkey</name>
    <dbReference type="NCBI Taxonomy" id="9541"/>
    <lineage>
        <taxon>Eukaryota</taxon>
        <taxon>Metazoa</taxon>
        <taxon>Chordata</taxon>
        <taxon>Craniata</taxon>
        <taxon>Vertebrata</taxon>
        <taxon>Euteleostomi</taxon>
        <taxon>Mammalia</taxon>
        <taxon>Eutheria</taxon>
        <taxon>Euarchontoglires</taxon>
        <taxon>Primates</taxon>
        <taxon>Haplorrhini</taxon>
        <taxon>Catarrhini</taxon>
        <taxon>Cercopithecidae</taxon>
        <taxon>Cercopithecinae</taxon>
        <taxon>Macaca</taxon>
    </lineage>
</organism>
<evidence type="ECO:0000250" key="1"/>
<evidence type="ECO:0000250" key="2">
    <source>
        <dbReference type="UniProtKB" id="P05213"/>
    </source>
</evidence>
<evidence type="ECO:0000250" key="3">
    <source>
        <dbReference type="UniProtKB" id="P68363"/>
    </source>
</evidence>
<evidence type="ECO:0000250" key="4">
    <source>
        <dbReference type="UniProtKB" id="P68369"/>
    </source>
</evidence>
<evidence type="ECO:0000250" key="5">
    <source>
        <dbReference type="UniProtKB" id="P68373"/>
    </source>
</evidence>
<evidence type="ECO:0000250" key="6">
    <source>
        <dbReference type="UniProtKB" id="Q71U36"/>
    </source>
</evidence>
<evidence type="ECO:0000256" key="7">
    <source>
        <dbReference type="SAM" id="MobiDB-lite"/>
    </source>
</evidence>
<evidence type="ECO:0000305" key="8"/>
<sequence>MRECISIHVGQAGVQIGNACWELYCLEHGIQPDGQMPSDKTIGGGDDSFNTFFSETGAGKHVPRAVFVDLEPTVIDEVRTGTYRQLFHPEQLITGKEDAANNYARGHYTIGKEIIDLVLDRIRKLADQCTGLQGFLVFHSFGGGTGSGFTSLLMERLSVDYGKKSKLEFSIYPAPQVSTAVVEPYNSILTTHTTLEHSDCAFMVDNEAIYDICRRNLDIERPTYTNLNRLISQIVSSITASLRFDGALNVDLTEFQTNLVPYPRIHFPLATYAPVISAEKAYHEQLSVAEITNACFEPANQMVKCDPRHGKYMACCLLYRGDVVPKDVNAAIATIKTKRSIQFVDWCPTGFKVGINYQPPTVVPGGDLAKVQRAVCMLSNTTAIAEAWARLDHKFDLMYAKRAFVHWYVGEGMEEGEFSEAREDMAALEKDYEEVGVDSVEGEGEEEGEEY</sequence>
<keyword id="KW-0007">Acetylation</keyword>
<keyword id="KW-0963">Cytoplasm</keyword>
<keyword id="KW-0206">Cytoskeleton</keyword>
<keyword id="KW-0342">GTP-binding</keyword>
<keyword id="KW-0378">Hydrolase</keyword>
<keyword id="KW-1017">Isopeptide bond</keyword>
<keyword id="KW-0460">Magnesium</keyword>
<keyword id="KW-0479">Metal-binding</keyword>
<keyword id="KW-0488">Methylation</keyword>
<keyword id="KW-0493">Microtubule</keyword>
<keyword id="KW-0944">Nitration</keyword>
<keyword id="KW-0547">Nucleotide-binding</keyword>
<keyword id="KW-0597">Phosphoprotein</keyword>
<keyword id="KW-1185">Reference proteome</keyword>
<keyword id="KW-0832">Ubl conjugation</keyword>
<protein>
    <recommendedName>
        <fullName>Tubulin alpha-1B chain</fullName>
        <ecNumber evidence="3">3.6.5.-</ecNumber>
    </recommendedName>
    <alternativeName>
        <fullName>Alpha-tubulin ubiquitous</fullName>
    </alternativeName>
    <alternativeName>
        <fullName>Tubulin K-alpha-1</fullName>
    </alternativeName>
    <alternativeName>
        <fullName>Tubulin alpha-ubiquitous chain</fullName>
    </alternativeName>
    <component>
        <recommendedName>
            <fullName>Detyrosinated tubulin alpha-1B chain</fullName>
        </recommendedName>
    </component>
</protein>
<name>TBA1B_MACFA</name>
<reference key="1">
    <citation type="submission" date="2005-06" db="EMBL/GenBank/DDBJ databases">
        <title>DNA sequences of macaque genes expressed in brain or testis and its evolutionary implications.</title>
        <authorList>
            <consortium name="International consortium for macaque cDNA sequencing and analysis"/>
        </authorList>
    </citation>
    <scope>NUCLEOTIDE SEQUENCE [LARGE SCALE MRNA]</scope>
    <source>
        <tissue>Brain cortex</tissue>
    </source>
</reference>